<feature type="chain" id="PRO_0000189014" description="Probable septum site-determining protein MinC">
    <location>
        <begin position="1"/>
        <end position="228"/>
    </location>
</feature>
<sequence length="228" mass="25174">MEEKKQQNVTIKGTKDGITLHLDDCCSFSELLMELDEKLSTHYYDGDGRSLIEVHVKVGNRYLTEVQQEEIRTLIRNKKNLVVDSIESDVITKAEAIAWKEETEIVPISKIVRSGQVLHVKGNLLLIGDVNPGGTVIAGGNIFVVGSLRGIAHAGYYGDSDAVIAASVMNPMQLRISDVAMRAPEEKEDGAEAAECAYINENNHIVVDRLQLLTHLRPNLTKLERGIV</sequence>
<comment type="function">
    <text evidence="1">Cell division inhibitor that blocks the formation of polar Z ring septums. Rapidly oscillates between the poles of the cell to destabilize FtsZ filaments that have formed before they mature into polar Z rings. Prevents FtsZ polymerization.</text>
</comment>
<comment type="subunit">
    <text evidence="1">Interacts with MinD and FtsZ.</text>
</comment>
<comment type="similarity">
    <text evidence="1">Belongs to the MinC family.</text>
</comment>
<dbReference type="EMBL" id="AE016877">
    <property type="protein sequence ID" value="AAP11356.1"/>
    <property type="molecule type" value="Genomic_DNA"/>
</dbReference>
<dbReference type="RefSeq" id="NP_834155.1">
    <property type="nucleotide sequence ID" value="NC_004722.1"/>
</dbReference>
<dbReference type="RefSeq" id="WP_000391521.1">
    <property type="nucleotide sequence ID" value="NZ_CP138336.1"/>
</dbReference>
<dbReference type="SMR" id="Q817T7"/>
<dbReference type="STRING" id="226900.BC_4443"/>
<dbReference type="GeneID" id="72451126"/>
<dbReference type="KEGG" id="bce:BC4443"/>
<dbReference type="PATRIC" id="fig|226900.8.peg.4594"/>
<dbReference type="HOGENOM" id="CLU_048711_1_1_9"/>
<dbReference type="OrthoDB" id="9790810at2"/>
<dbReference type="Proteomes" id="UP000001417">
    <property type="component" value="Chromosome"/>
</dbReference>
<dbReference type="GO" id="GO:0000902">
    <property type="term" value="P:cell morphogenesis"/>
    <property type="evidence" value="ECO:0007669"/>
    <property type="project" value="InterPro"/>
</dbReference>
<dbReference type="GO" id="GO:0000917">
    <property type="term" value="P:division septum assembly"/>
    <property type="evidence" value="ECO:0007669"/>
    <property type="project" value="UniProtKB-KW"/>
</dbReference>
<dbReference type="GO" id="GO:1901891">
    <property type="term" value="P:regulation of cell septum assembly"/>
    <property type="evidence" value="ECO:0007669"/>
    <property type="project" value="InterPro"/>
</dbReference>
<dbReference type="FunFam" id="2.160.20.70:FF:000003">
    <property type="entry name" value="Probable septum site-determining protein MinC"/>
    <property type="match status" value="1"/>
</dbReference>
<dbReference type="FunFam" id="3.30.160.540:FF:000001">
    <property type="entry name" value="Probable septum site-determining protein MinC"/>
    <property type="match status" value="1"/>
</dbReference>
<dbReference type="Gene3D" id="2.160.20.70">
    <property type="match status" value="1"/>
</dbReference>
<dbReference type="Gene3D" id="3.30.160.540">
    <property type="match status" value="1"/>
</dbReference>
<dbReference type="HAMAP" id="MF_00267">
    <property type="entry name" value="MinC"/>
    <property type="match status" value="1"/>
</dbReference>
<dbReference type="InterPro" id="IPR016098">
    <property type="entry name" value="CAP/MinC_C"/>
</dbReference>
<dbReference type="InterPro" id="IPR013033">
    <property type="entry name" value="MinC"/>
</dbReference>
<dbReference type="InterPro" id="IPR036145">
    <property type="entry name" value="MinC_C_sf"/>
</dbReference>
<dbReference type="InterPro" id="IPR055219">
    <property type="entry name" value="MinC_N_1"/>
</dbReference>
<dbReference type="InterPro" id="IPR005526">
    <property type="entry name" value="Septum_form_inhib_MinC_C"/>
</dbReference>
<dbReference type="NCBIfam" id="TIGR01222">
    <property type="entry name" value="minC"/>
    <property type="match status" value="1"/>
</dbReference>
<dbReference type="PANTHER" id="PTHR34108">
    <property type="entry name" value="SEPTUM SITE-DETERMINING PROTEIN MINC"/>
    <property type="match status" value="1"/>
</dbReference>
<dbReference type="PANTHER" id="PTHR34108:SF1">
    <property type="entry name" value="SEPTUM SITE-DETERMINING PROTEIN MINC"/>
    <property type="match status" value="1"/>
</dbReference>
<dbReference type="Pfam" id="PF03775">
    <property type="entry name" value="MinC_C"/>
    <property type="match status" value="1"/>
</dbReference>
<dbReference type="Pfam" id="PF22642">
    <property type="entry name" value="MinC_N_1"/>
    <property type="match status" value="1"/>
</dbReference>
<dbReference type="SUPFAM" id="SSF63848">
    <property type="entry name" value="Cell-division inhibitor MinC, C-terminal domain"/>
    <property type="match status" value="1"/>
</dbReference>
<evidence type="ECO:0000255" key="1">
    <source>
        <dbReference type="HAMAP-Rule" id="MF_00267"/>
    </source>
</evidence>
<keyword id="KW-0131">Cell cycle</keyword>
<keyword id="KW-0132">Cell division</keyword>
<keyword id="KW-1185">Reference proteome</keyword>
<keyword id="KW-0717">Septation</keyword>
<accession>Q817T7</accession>
<reference key="1">
    <citation type="journal article" date="2003" name="Nature">
        <title>Genome sequence of Bacillus cereus and comparative analysis with Bacillus anthracis.</title>
        <authorList>
            <person name="Ivanova N."/>
            <person name="Sorokin A."/>
            <person name="Anderson I."/>
            <person name="Galleron N."/>
            <person name="Candelon B."/>
            <person name="Kapatral V."/>
            <person name="Bhattacharyya A."/>
            <person name="Reznik G."/>
            <person name="Mikhailova N."/>
            <person name="Lapidus A."/>
            <person name="Chu L."/>
            <person name="Mazur M."/>
            <person name="Goltsman E."/>
            <person name="Larsen N."/>
            <person name="D'Souza M."/>
            <person name="Walunas T."/>
            <person name="Grechkin Y."/>
            <person name="Pusch G."/>
            <person name="Haselkorn R."/>
            <person name="Fonstein M."/>
            <person name="Ehrlich S.D."/>
            <person name="Overbeek R."/>
            <person name="Kyrpides N.C."/>
        </authorList>
    </citation>
    <scope>NUCLEOTIDE SEQUENCE [LARGE SCALE GENOMIC DNA]</scope>
    <source>
        <strain>ATCC 14579 / DSM 31 / CCUG 7414 / JCM 2152 / NBRC 15305 / NCIMB 9373 / NCTC 2599 / NRRL B-3711</strain>
    </source>
</reference>
<name>MINC_BACCR</name>
<gene>
    <name evidence="1" type="primary">minC</name>
    <name type="ordered locus">BC_4443</name>
</gene>
<organism>
    <name type="scientific">Bacillus cereus (strain ATCC 14579 / DSM 31 / CCUG 7414 / JCM 2152 / NBRC 15305 / NCIMB 9373 / NCTC 2599 / NRRL B-3711)</name>
    <dbReference type="NCBI Taxonomy" id="226900"/>
    <lineage>
        <taxon>Bacteria</taxon>
        <taxon>Bacillati</taxon>
        <taxon>Bacillota</taxon>
        <taxon>Bacilli</taxon>
        <taxon>Bacillales</taxon>
        <taxon>Bacillaceae</taxon>
        <taxon>Bacillus</taxon>
        <taxon>Bacillus cereus group</taxon>
    </lineage>
</organism>
<protein>
    <recommendedName>
        <fullName evidence="1">Probable septum site-determining protein MinC</fullName>
    </recommendedName>
</protein>
<proteinExistence type="inferred from homology"/>